<protein>
    <recommendedName>
        <fullName evidence="1">Large ribosomal subunit protein uL29</fullName>
    </recommendedName>
    <alternativeName>
        <fullName>50S ribosomal protein L29</fullName>
    </alternativeName>
</protein>
<evidence type="ECO:0000305" key="1"/>
<keyword id="KW-0687">Ribonucleoprotein</keyword>
<keyword id="KW-0689">Ribosomal protein</keyword>
<accession>Q9PE68</accession>
<sequence>MNIEQFRAKSVDDLKAHLIELRKEQFSMRMQLAMGQFQKTHEIRRVRRNIARVKYVLSWINRASA</sequence>
<reference key="1">
    <citation type="journal article" date="2000" name="Nature">
        <title>The genome sequence of the plant pathogen Xylella fastidiosa.</title>
        <authorList>
            <person name="Simpson A.J.G."/>
            <person name="Reinach F.C."/>
            <person name="Arruda P."/>
            <person name="Abreu F.A."/>
            <person name="Acencio M."/>
            <person name="Alvarenga R."/>
            <person name="Alves L.M.C."/>
            <person name="Araya J.E."/>
            <person name="Baia G.S."/>
            <person name="Baptista C.S."/>
            <person name="Barros M.H."/>
            <person name="Bonaccorsi E.D."/>
            <person name="Bordin S."/>
            <person name="Bove J.M."/>
            <person name="Briones M.R.S."/>
            <person name="Bueno M.R.P."/>
            <person name="Camargo A.A."/>
            <person name="Camargo L.E.A."/>
            <person name="Carraro D.M."/>
            <person name="Carrer H."/>
            <person name="Colauto N.B."/>
            <person name="Colombo C."/>
            <person name="Costa F.F."/>
            <person name="Costa M.C.R."/>
            <person name="Costa-Neto C.M."/>
            <person name="Coutinho L.L."/>
            <person name="Cristofani M."/>
            <person name="Dias-Neto E."/>
            <person name="Docena C."/>
            <person name="El-Dorry H."/>
            <person name="Facincani A.P."/>
            <person name="Ferreira A.J.S."/>
            <person name="Ferreira V.C.A."/>
            <person name="Ferro J.A."/>
            <person name="Fraga J.S."/>
            <person name="Franca S.C."/>
            <person name="Franco M.C."/>
            <person name="Frohme M."/>
            <person name="Furlan L.R."/>
            <person name="Garnier M."/>
            <person name="Goldman G.H."/>
            <person name="Goldman M.H.S."/>
            <person name="Gomes S.L."/>
            <person name="Gruber A."/>
            <person name="Ho P.L."/>
            <person name="Hoheisel J.D."/>
            <person name="Junqueira M.L."/>
            <person name="Kemper E.L."/>
            <person name="Kitajima J.P."/>
            <person name="Krieger J.E."/>
            <person name="Kuramae E.E."/>
            <person name="Laigret F."/>
            <person name="Lambais M.R."/>
            <person name="Leite L.C.C."/>
            <person name="Lemos E.G.M."/>
            <person name="Lemos M.V.F."/>
            <person name="Lopes S.A."/>
            <person name="Lopes C.R."/>
            <person name="Machado J.A."/>
            <person name="Machado M.A."/>
            <person name="Madeira A.M.B.N."/>
            <person name="Madeira H.M.F."/>
            <person name="Marino C.L."/>
            <person name="Marques M.V."/>
            <person name="Martins E.A.L."/>
            <person name="Martins E.M.F."/>
            <person name="Matsukuma A.Y."/>
            <person name="Menck C.F.M."/>
            <person name="Miracca E.C."/>
            <person name="Miyaki C.Y."/>
            <person name="Monteiro-Vitorello C.B."/>
            <person name="Moon D.H."/>
            <person name="Nagai M.A."/>
            <person name="Nascimento A.L.T.O."/>
            <person name="Netto L.E.S."/>
            <person name="Nhani A. Jr."/>
            <person name="Nobrega F.G."/>
            <person name="Nunes L.R."/>
            <person name="Oliveira M.A."/>
            <person name="de Oliveira M.C."/>
            <person name="de Oliveira R.C."/>
            <person name="Palmieri D.A."/>
            <person name="Paris A."/>
            <person name="Peixoto B.R."/>
            <person name="Pereira G.A.G."/>
            <person name="Pereira H.A. Jr."/>
            <person name="Pesquero J.B."/>
            <person name="Quaggio R.B."/>
            <person name="Roberto P.G."/>
            <person name="Rodrigues V."/>
            <person name="de Rosa A.J.M."/>
            <person name="de Rosa V.E. Jr."/>
            <person name="de Sa R.G."/>
            <person name="Santelli R.V."/>
            <person name="Sawasaki H.E."/>
            <person name="da Silva A.C.R."/>
            <person name="da Silva A.M."/>
            <person name="da Silva F.R."/>
            <person name="Silva W.A. Jr."/>
            <person name="da Silveira J.F."/>
            <person name="Silvestri M.L.Z."/>
            <person name="Siqueira W.J."/>
            <person name="de Souza A.A."/>
            <person name="de Souza A.P."/>
            <person name="Terenzi M.F."/>
            <person name="Truffi D."/>
            <person name="Tsai S.M."/>
            <person name="Tsuhako M.H."/>
            <person name="Vallada H."/>
            <person name="Van Sluys M.A."/>
            <person name="Verjovski-Almeida S."/>
            <person name="Vettore A.L."/>
            <person name="Zago M.A."/>
            <person name="Zatz M."/>
            <person name="Meidanis J."/>
            <person name="Setubal J.C."/>
        </authorList>
    </citation>
    <scope>NUCLEOTIDE SEQUENCE [LARGE SCALE GENOMIC DNA]</scope>
    <source>
        <strain>9a5c</strain>
    </source>
</reference>
<gene>
    <name type="primary">rpmC</name>
    <name type="ordered locus">XF_1160</name>
</gene>
<proteinExistence type="inferred from homology"/>
<organism>
    <name type="scientific">Xylella fastidiosa (strain 9a5c)</name>
    <dbReference type="NCBI Taxonomy" id="160492"/>
    <lineage>
        <taxon>Bacteria</taxon>
        <taxon>Pseudomonadati</taxon>
        <taxon>Pseudomonadota</taxon>
        <taxon>Gammaproteobacteria</taxon>
        <taxon>Lysobacterales</taxon>
        <taxon>Lysobacteraceae</taxon>
        <taxon>Xylella</taxon>
    </lineage>
</organism>
<feature type="chain" id="PRO_0000130501" description="Large ribosomal subunit protein uL29">
    <location>
        <begin position="1"/>
        <end position="65"/>
    </location>
</feature>
<comment type="similarity">
    <text evidence="1">Belongs to the universal ribosomal protein uL29 family.</text>
</comment>
<dbReference type="EMBL" id="AE003849">
    <property type="protein sequence ID" value="AAF83970.1"/>
    <property type="molecule type" value="Genomic_DNA"/>
</dbReference>
<dbReference type="PIR" id="H82717">
    <property type="entry name" value="H82717"/>
</dbReference>
<dbReference type="RefSeq" id="WP_010893675.1">
    <property type="nucleotide sequence ID" value="NC_002488.3"/>
</dbReference>
<dbReference type="SMR" id="Q9PE68"/>
<dbReference type="STRING" id="160492.XF_1160"/>
<dbReference type="KEGG" id="xfa:XF_1160"/>
<dbReference type="eggNOG" id="COG0255">
    <property type="taxonomic scope" value="Bacteria"/>
</dbReference>
<dbReference type="HOGENOM" id="CLU_158491_1_2_6"/>
<dbReference type="Proteomes" id="UP000000812">
    <property type="component" value="Chromosome"/>
</dbReference>
<dbReference type="GO" id="GO:0022625">
    <property type="term" value="C:cytosolic large ribosomal subunit"/>
    <property type="evidence" value="ECO:0007669"/>
    <property type="project" value="TreeGrafter"/>
</dbReference>
<dbReference type="GO" id="GO:0003735">
    <property type="term" value="F:structural constituent of ribosome"/>
    <property type="evidence" value="ECO:0007669"/>
    <property type="project" value="InterPro"/>
</dbReference>
<dbReference type="GO" id="GO:0006412">
    <property type="term" value="P:translation"/>
    <property type="evidence" value="ECO:0007669"/>
    <property type="project" value="UniProtKB-UniRule"/>
</dbReference>
<dbReference type="CDD" id="cd00427">
    <property type="entry name" value="Ribosomal_L29_HIP"/>
    <property type="match status" value="1"/>
</dbReference>
<dbReference type="FunFam" id="1.10.287.310:FF:000001">
    <property type="entry name" value="50S ribosomal protein L29"/>
    <property type="match status" value="1"/>
</dbReference>
<dbReference type="Gene3D" id="1.10.287.310">
    <property type="match status" value="1"/>
</dbReference>
<dbReference type="HAMAP" id="MF_00374">
    <property type="entry name" value="Ribosomal_uL29"/>
    <property type="match status" value="1"/>
</dbReference>
<dbReference type="InterPro" id="IPR050063">
    <property type="entry name" value="Ribosomal_protein_uL29"/>
</dbReference>
<dbReference type="InterPro" id="IPR001854">
    <property type="entry name" value="Ribosomal_uL29"/>
</dbReference>
<dbReference type="InterPro" id="IPR018254">
    <property type="entry name" value="Ribosomal_uL29_CS"/>
</dbReference>
<dbReference type="InterPro" id="IPR036049">
    <property type="entry name" value="Ribosomal_uL29_sf"/>
</dbReference>
<dbReference type="NCBIfam" id="TIGR00012">
    <property type="entry name" value="L29"/>
    <property type="match status" value="1"/>
</dbReference>
<dbReference type="PANTHER" id="PTHR10916">
    <property type="entry name" value="60S RIBOSOMAL PROTEIN L35/50S RIBOSOMAL PROTEIN L29"/>
    <property type="match status" value="1"/>
</dbReference>
<dbReference type="PANTHER" id="PTHR10916:SF0">
    <property type="entry name" value="LARGE RIBOSOMAL SUBUNIT PROTEIN UL29C"/>
    <property type="match status" value="1"/>
</dbReference>
<dbReference type="Pfam" id="PF00831">
    <property type="entry name" value="Ribosomal_L29"/>
    <property type="match status" value="1"/>
</dbReference>
<dbReference type="SUPFAM" id="SSF46561">
    <property type="entry name" value="Ribosomal protein L29 (L29p)"/>
    <property type="match status" value="1"/>
</dbReference>
<dbReference type="PROSITE" id="PS00579">
    <property type="entry name" value="RIBOSOMAL_L29"/>
    <property type="match status" value="1"/>
</dbReference>
<name>RL29_XYLFA</name>